<keyword id="KW-0030">Aminoacyl-tRNA synthetase</keyword>
<keyword id="KW-0067">ATP-binding</keyword>
<keyword id="KW-0963">Cytoplasm</keyword>
<keyword id="KW-0436">Ligase</keyword>
<keyword id="KW-0547">Nucleotide-binding</keyword>
<keyword id="KW-0648">Protein biosynthesis</keyword>
<keyword id="KW-1185">Reference proteome</keyword>
<sequence>MSVQPETETGTAAVATEGPEEGTYSFAAMEAKWPQVWEDLKVFTPVDDGSRERRYVLDMFPYPSGDLHMGHAEAFAMGDVVARYLRQKGYDVLHPIGWDSFGLPAENAAIKRNAHPSEWTYANIDTQAASFKRYAISADWSRRLHTSDPEYYRWTQWLFKRFYERGLAYRKDSPVNWCPKDQTVLANEQVVNGACERCGTAVTKKSLNQWYFKITDYADRLLDDMDELRGHWPERVLAMQKNWIGRSEGAHVNFVIEAAGDKPAKDVTVFTTRPDTLYGATFFVVAADAPMAVELVTDEHAAALDAYREQVKALSEIERQSTEREKTGVFTGRYAVNPLNGEKLPVWAADYVLADYGTGAIMAVPAHDQRDLDFARTFDLPVRAVLDTGEDDPAVTGKATAGEGTLINSGVLDGLPKAEAIPTAIDMLEKQGTGEKFVNFRLRDWLLSRQRFWGTPIPIIHCPACGEVPVPDDQLPVTLPADLRGEDLSPKGTSPLAAAEAWVNVECPNCHGPAKRDTDTMDTFVDSSWYFLRFVSPQYTEGPFDPKKINDWMPVGQYVGGVEHAILHLLYARFFTKVIHDLGMIDADEPFSALLNQGQVLNGGKAMSKSLGNGVDLGEQLDKYGVDAVRLTMIFASPPEDDVDWADVSPSGSAKFLARAWRLAQDVSSAPGADAAQGDRALRSVTHRTIADAAALLDSNKFNVVVAKLMELVNATRKTIDAASGAGGADPAVREAAEAVAVILSLFAPYTAEDMWNVLGHPASVANAGWPSHDEALLVQDTVTAVVQVQGKVRDRLEVSPEIGEDELRELALASENVQRALDGRGIRTVIVRAPKLVNIVPA</sequence>
<protein>
    <recommendedName>
        <fullName evidence="1">Leucine--tRNA ligase</fullName>
        <ecNumber evidence="1">6.1.1.4</ecNumber>
    </recommendedName>
    <alternativeName>
        <fullName evidence="1">Leucyl-tRNA synthetase</fullName>
        <shortName evidence="1">LeuRS</shortName>
    </alternativeName>
</protein>
<gene>
    <name evidence="1" type="primary">leuS</name>
    <name type="ordered locus">Arth_2247</name>
</gene>
<feature type="chain" id="PRO_0000334729" description="Leucine--tRNA ligase">
    <location>
        <begin position="1"/>
        <end position="843"/>
    </location>
</feature>
<feature type="short sequence motif" description="'HIGH' region">
    <location>
        <begin position="61"/>
        <end position="71"/>
    </location>
</feature>
<feature type="short sequence motif" description="'KMSKS' region">
    <location>
        <begin position="606"/>
        <end position="610"/>
    </location>
</feature>
<feature type="binding site" evidence="1">
    <location>
        <position position="609"/>
    </location>
    <ligand>
        <name>ATP</name>
        <dbReference type="ChEBI" id="CHEBI:30616"/>
    </ligand>
</feature>
<reference key="1">
    <citation type="journal article" date="2013" name="Stand. Genomic Sci.">
        <title>Complete genome sequence of Arthrobacter sp. strain FB24.</title>
        <authorList>
            <person name="Nakatsu C.H."/>
            <person name="Barabote R."/>
            <person name="Thompson S."/>
            <person name="Bruce D."/>
            <person name="Detter C."/>
            <person name="Brettin T."/>
            <person name="Han C."/>
            <person name="Beasley F."/>
            <person name="Chen W."/>
            <person name="Konopka A."/>
            <person name="Xie G."/>
        </authorList>
    </citation>
    <scope>NUCLEOTIDE SEQUENCE [LARGE SCALE GENOMIC DNA]</scope>
    <source>
        <strain>FB24</strain>
    </source>
</reference>
<comment type="catalytic activity">
    <reaction evidence="1">
        <text>tRNA(Leu) + L-leucine + ATP = L-leucyl-tRNA(Leu) + AMP + diphosphate</text>
        <dbReference type="Rhea" id="RHEA:11688"/>
        <dbReference type="Rhea" id="RHEA-COMP:9613"/>
        <dbReference type="Rhea" id="RHEA-COMP:9622"/>
        <dbReference type="ChEBI" id="CHEBI:30616"/>
        <dbReference type="ChEBI" id="CHEBI:33019"/>
        <dbReference type="ChEBI" id="CHEBI:57427"/>
        <dbReference type="ChEBI" id="CHEBI:78442"/>
        <dbReference type="ChEBI" id="CHEBI:78494"/>
        <dbReference type="ChEBI" id="CHEBI:456215"/>
        <dbReference type="EC" id="6.1.1.4"/>
    </reaction>
</comment>
<comment type="subcellular location">
    <subcellularLocation>
        <location evidence="1">Cytoplasm</location>
    </subcellularLocation>
</comment>
<comment type="similarity">
    <text evidence="1">Belongs to the class-I aminoacyl-tRNA synthetase family.</text>
</comment>
<dbReference type="EC" id="6.1.1.4" evidence="1"/>
<dbReference type="EMBL" id="CP000454">
    <property type="protein sequence ID" value="ABK03627.1"/>
    <property type="molecule type" value="Genomic_DNA"/>
</dbReference>
<dbReference type="RefSeq" id="WP_011692091.1">
    <property type="nucleotide sequence ID" value="NC_008541.1"/>
</dbReference>
<dbReference type="SMR" id="A0JX57"/>
<dbReference type="STRING" id="290399.Arth_2247"/>
<dbReference type="KEGG" id="art:Arth_2247"/>
<dbReference type="eggNOG" id="COG0495">
    <property type="taxonomic scope" value="Bacteria"/>
</dbReference>
<dbReference type="HOGENOM" id="CLU_004427_0_0_11"/>
<dbReference type="OrthoDB" id="9810365at2"/>
<dbReference type="Proteomes" id="UP000000754">
    <property type="component" value="Chromosome"/>
</dbReference>
<dbReference type="GO" id="GO:0005829">
    <property type="term" value="C:cytosol"/>
    <property type="evidence" value="ECO:0007669"/>
    <property type="project" value="TreeGrafter"/>
</dbReference>
<dbReference type="GO" id="GO:0002161">
    <property type="term" value="F:aminoacyl-tRNA deacylase activity"/>
    <property type="evidence" value="ECO:0007669"/>
    <property type="project" value="InterPro"/>
</dbReference>
<dbReference type="GO" id="GO:0005524">
    <property type="term" value="F:ATP binding"/>
    <property type="evidence" value="ECO:0007669"/>
    <property type="project" value="UniProtKB-UniRule"/>
</dbReference>
<dbReference type="GO" id="GO:0004823">
    <property type="term" value="F:leucine-tRNA ligase activity"/>
    <property type="evidence" value="ECO:0007669"/>
    <property type="project" value="UniProtKB-UniRule"/>
</dbReference>
<dbReference type="GO" id="GO:0006429">
    <property type="term" value="P:leucyl-tRNA aminoacylation"/>
    <property type="evidence" value="ECO:0007669"/>
    <property type="project" value="UniProtKB-UniRule"/>
</dbReference>
<dbReference type="CDD" id="cd00812">
    <property type="entry name" value="LeuRS_core"/>
    <property type="match status" value="1"/>
</dbReference>
<dbReference type="FunFam" id="1.10.730.10:FF:000002">
    <property type="entry name" value="Leucine--tRNA ligase"/>
    <property type="match status" value="1"/>
</dbReference>
<dbReference type="FunFam" id="3.40.50.620:FF:000003">
    <property type="entry name" value="Leucine--tRNA ligase"/>
    <property type="match status" value="1"/>
</dbReference>
<dbReference type="FunFam" id="3.40.50.620:FF:000056">
    <property type="entry name" value="Leucine--tRNA ligase"/>
    <property type="match status" value="1"/>
</dbReference>
<dbReference type="Gene3D" id="3.10.20.590">
    <property type="match status" value="1"/>
</dbReference>
<dbReference type="Gene3D" id="3.40.50.620">
    <property type="entry name" value="HUPs"/>
    <property type="match status" value="2"/>
</dbReference>
<dbReference type="Gene3D" id="1.10.730.10">
    <property type="entry name" value="Isoleucyl-tRNA Synthetase, Domain 1"/>
    <property type="match status" value="1"/>
</dbReference>
<dbReference type="Gene3D" id="3.90.740.10">
    <property type="entry name" value="Valyl/Leucyl/Isoleucyl-tRNA synthetase, editing domain"/>
    <property type="match status" value="1"/>
</dbReference>
<dbReference type="HAMAP" id="MF_00049_B">
    <property type="entry name" value="Leu_tRNA_synth_B"/>
    <property type="match status" value="1"/>
</dbReference>
<dbReference type="InterPro" id="IPR001412">
    <property type="entry name" value="aa-tRNA-synth_I_CS"/>
</dbReference>
<dbReference type="InterPro" id="IPR002300">
    <property type="entry name" value="aa-tRNA-synth_Ia"/>
</dbReference>
<dbReference type="InterPro" id="IPR002302">
    <property type="entry name" value="Leu-tRNA-ligase"/>
</dbReference>
<dbReference type="InterPro" id="IPR025709">
    <property type="entry name" value="Leu_tRNA-synth_edit"/>
</dbReference>
<dbReference type="InterPro" id="IPR013155">
    <property type="entry name" value="M/V/L/I-tRNA-synth_anticd-bd"/>
</dbReference>
<dbReference type="InterPro" id="IPR015413">
    <property type="entry name" value="Methionyl/Leucyl_tRNA_Synth"/>
</dbReference>
<dbReference type="InterPro" id="IPR014729">
    <property type="entry name" value="Rossmann-like_a/b/a_fold"/>
</dbReference>
<dbReference type="InterPro" id="IPR009080">
    <property type="entry name" value="tRNAsynth_Ia_anticodon-bd"/>
</dbReference>
<dbReference type="InterPro" id="IPR009008">
    <property type="entry name" value="Val/Leu/Ile-tRNA-synth_edit"/>
</dbReference>
<dbReference type="NCBIfam" id="TIGR00396">
    <property type="entry name" value="leuS_bact"/>
    <property type="match status" value="1"/>
</dbReference>
<dbReference type="PANTHER" id="PTHR43740:SF2">
    <property type="entry name" value="LEUCINE--TRNA LIGASE, MITOCHONDRIAL"/>
    <property type="match status" value="1"/>
</dbReference>
<dbReference type="PANTHER" id="PTHR43740">
    <property type="entry name" value="LEUCYL-TRNA SYNTHETASE"/>
    <property type="match status" value="1"/>
</dbReference>
<dbReference type="Pfam" id="PF08264">
    <property type="entry name" value="Anticodon_1"/>
    <property type="match status" value="1"/>
</dbReference>
<dbReference type="Pfam" id="PF00133">
    <property type="entry name" value="tRNA-synt_1"/>
    <property type="match status" value="1"/>
</dbReference>
<dbReference type="Pfam" id="PF13603">
    <property type="entry name" value="tRNA-synt_1_2"/>
    <property type="match status" value="1"/>
</dbReference>
<dbReference type="Pfam" id="PF09334">
    <property type="entry name" value="tRNA-synt_1g"/>
    <property type="match status" value="1"/>
</dbReference>
<dbReference type="PRINTS" id="PR00985">
    <property type="entry name" value="TRNASYNTHLEU"/>
</dbReference>
<dbReference type="SUPFAM" id="SSF47323">
    <property type="entry name" value="Anticodon-binding domain of a subclass of class I aminoacyl-tRNA synthetases"/>
    <property type="match status" value="1"/>
</dbReference>
<dbReference type="SUPFAM" id="SSF52374">
    <property type="entry name" value="Nucleotidylyl transferase"/>
    <property type="match status" value="1"/>
</dbReference>
<dbReference type="SUPFAM" id="SSF50677">
    <property type="entry name" value="ValRS/IleRS/LeuRS editing domain"/>
    <property type="match status" value="1"/>
</dbReference>
<dbReference type="PROSITE" id="PS00178">
    <property type="entry name" value="AA_TRNA_LIGASE_I"/>
    <property type="match status" value="1"/>
</dbReference>
<proteinExistence type="inferred from homology"/>
<organism>
    <name type="scientific">Arthrobacter sp. (strain FB24)</name>
    <dbReference type="NCBI Taxonomy" id="290399"/>
    <lineage>
        <taxon>Bacteria</taxon>
        <taxon>Bacillati</taxon>
        <taxon>Actinomycetota</taxon>
        <taxon>Actinomycetes</taxon>
        <taxon>Micrococcales</taxon>
        <taxon>Micrococcaceae</taxon>
        <taxon>Arthrobacter</taxon>
    </lineage>
</organism>
<evidence type="ECO:0000255" key="1">
    <source>
        <dbReference type="HAMAP-Rule" id="MF_00049"/>
    </source>
</evidence>
<name>SYL_ARTS2</name>
<accession>A0JX57</accession>